<dbReference type="EMBL" id="DQ273569">
    <property type="protein sequence ID" value="ABB83623.1"/>
    <property type="molecule type" value="mRNA"/>
</dbReference>
<dbReference type="SMR" id="Q2VBP6"/>
<dbReference type="TopDownProteomics" id="Q2VBP6"/>
<dbReference type="GO" id="GO:0005576">
    <property type="term" value="C:extracellular region"/>
    <property type="evidence" value="ECO:0007669"/>
    <property type="project" value="UniProtKB-SubCell"/>
</dbReference>
<dbReference type="GO" id="GO:0030550">
    <property type="term" value="F:acetylcholine receptor inhibitor activity"/>
    <property type="evidence" value="ECO:0007669"/>
    <property type="project" value="UniProtKB-KW"/>
</dbReference>
<dbReference type="GO" id="GO:0099106">
    <property type="term" value="F:ion channel regulator activity"/>
    <property type="evidence" value="ECO:0007669"/>
    <property type="project" value="UniProtKB-KW"/>
</dbReference>
<dbReference type="GO" id="GO:0090729">
    <property type="term" value="F:toxin activity"/>
    <property type="evidence" value="ECO:0007669"/>
    <property type="project" value="UniProtKB-KW"/>
</dbReference>
<dbReference type="CDD" id="cd00206">
    <property type="entry name" value="TFP_snake_toxin"/>
    <property type="match status" value="1"/>
</dbReference>
<dbReference type="Gene3D" id="2.10.60.10">
    <property type="entry name" value="CD59"/>
    <property type="match status" value="1"/>
</dbReference>
<dbReference type="InterPro" id="IPR003571">
    <property type="entry name" value="Snake_3FTx"/>
</dbReference>
<dbReference type="InterPro" id="IPR045860">
    <property type="entry name" value="Snake_toxin-like_sf"/>
</dbReference>
<dbReference type="InterPro" id="IPR018354">
    <property type="entry name" value="Snake_toxin_con_site"/>
</dbReference>
<dbReference type="InterPro" id="IPR054131">
    <property type="entry name" value="Toxin_cobra-type"/>
</dbReference>
<dbReference type="Pfam" id="PF21947">
    <property type="entry name" value="Toxin_cobra-type"/>
    <property type="match status" value="1"/>
</dbReference>
<dbReference type="SUPFAM" id="SSF57302">
    <property type="entry name" value="Snake toxin-like"/>
    <property type="match status" value="1"/>
</dbReference>
<dbReference type="PROSITE" id="PS00272">
    <property type="entry name" value="SNAKE_TOXIN"/>
    <property type="match status" value="1"/>
</dbReference>
<proteinExistence type="inferred from homology"/>
<name>3L2X8_OPHHA</name>
<keyword id="KW-0008">Acetylcholine receptor inhibiting toxin</keyword>
<keyword id="KW-1015">Disulfide bond</keyword>
<keyword id="KW-0872">Ion channel impairing toxin</keyword>
<keyword id="KW-0528">Neurotoxin</keyword>
<keyword id="KW-0629">Postsynaptic neurotoxin</keyword>
<keyword id="KW-0964">Secreted</keyword>
<keyword id="KW-0732">Signal</keyword>
<keyword id="KW-0800">Toxin</keyword>
<sequence length="94" mass="10509">MKTLLLTLVVVTIMCLDLGYTTKCYKTGERIISETCPPGQDLCYMKTWCDVFCGSRGRVVELGCTATCPTVKPHEQITCCSTDNCNPHPKMKQR</sequence>
<protein>
    <recommendedName>
        <fullName>Long neurotoxin LNTX8</fullName>
    </recommendedName>
</protein>
<accession>Q2VBP6</accession>
<evidence type="ECO:0000250" key="1"/>
<evidence type="ECO:0000250" key="2">
    <source>
        <dbReference type="UniProtKB" id="P60615"/>
    </source>
</evidence>
<evidence type="ECO:0000305" key="3"/>
<organism>
    <name type="scientific">Ophiophagus hannah</name>
    <name type="common">King cobra</name>
    <name type="synonym">Naja hannah</name>
    <dbReference type="NCBI Taxonomy" id="8665"/>
    <lineage>
        <taxon>Eukaryota</taxon>
        <taxon>Metazoa</taxon>
        <taxon>Chordata</taxon>
        <taxon>Craniata</taxon>
        <taxon>Vertebrata</taxon>
        <taxon>Euteleostomi</taxon>
        <taxon>Lepidosauria</taxon>
        <taxon>Squamata</taxon>
        <taxon>Bifurcata</taxon>
        <taxon>Unidentata</taxon>
        <taxon>Episquamata</taxon>
        <taxon>Toxicofera</taxon>
        <taxon>Serpentes</taxon>
        <taxon>Colubroidea</taxon>
        <taxon>Elapidae</taxon>
        <taxon>Elapinae</taxon>
        <taxon>Ophiophagus</taxon>
    </lineage>
</organism>
<feature type="signal peptide" evidence="1">
    <location>
        <begin position="1"/>
        <end position="21"/>
    </location>
</feature>
<feature type="chain" id="PRO_5000006479" description="Long neurotoxin LNTX8">
    <location>
        <begin position="22"/>
        <end position="94"/>
    </location>
</feature>
<feature type="disulfide bond" evidence="1">
    <location>
        <begin position="24"/>
        <end position="43"/>
    </location>
</feature>
<feature type="disulfide bond" evidence="1">
    <location>
        <begin position="36"/>
        <end position="64"/>
    </location>
</feature>
<feature type="disulfide bond" evidence="1">
    <location>
        <begin position="49"/>
        <end position="53"/>
    </location>
</feature>
<feature type="disulfide bond" evidence="1">
    <location>
        <begin position="68"/>
        <end position="79"/>
    </location>
</feature>
<feature type="disulfide bond" evidence="1">
    <location>
        <begin position="80"/>
        <end position="85"/>
    </location>
</feature>
<reference key="1">
    <citation type="journal article" date="2006" name="Biochem. J.">
        <title>Novel genes encoding six kinds of three-finger toxins in Ophiophagus hannah (king cobra) and function characterization of two recombinant long-chain neurotoxins.</title>
        <authorList>
            <person name="Li J."/>
            <person name="Zhang H."/>
            <person name="Liu J."/>
            <person name="Xu K."/>
        </authorList>
    </citation>
    <scope>NUCLEOTIDE SEQUENCE [MRNA]</scope>
    <source>
        <tissue>Venom gland</tissue>
    </source>
</reference>
<comment type="function">
    <text evidence="2">Binds with high affinity to muscular (alpha-1/CHRNA1) and neuronal (alpha-7/CHRNA7) nicotinic acetylcholine receptor (nAChR) and inhibits acetylcholine from binding to the receptor, thereby impairing neuromuscular and neuronal transmission.</text>
</comment>
<comment type="subcellular location">
    <subcellularLocation>
        <location evidence="1">Secreted</location>
    </subcellularLocation>
</comment>
<comment type="tissue specificity">
    <text evidence="3">Expressed by the venom gland.</text>
</comment>
<comment type="similarity">
    <text evidence="3">Belongs to the three-finger toxin family. Long-chain subfamily. Type II alpha-neurotoxin sub-subfamily.</text>
</comment>